<feature type="chain" id="PRO_0000152910" description="Sulfur carrier protein FdhD">
    <location>
        <begin position="1"/>
        <end position="276"/>
    </location>
</feature>
<feature type="active site" description="Cysteine persulfide intermediate" evidence="1">
    <location>
        <position position="118"/>
    </location>
</feature>
<dbReference type="EMBL" id="LT708304">
    <property type="protein sequence ID" value="SIU01544.1"/>
    <property type="molecule type" value="Genomic_DNA"/>
</dbReference>
<dbReference type="RefSeq" id="NP_856568.1">
    <property type="nucleotide sequence ID" value="NC_002945.3"/>
</dbReference>
<dbReference type="RefSeq" id="WP_003414705.1">
    <property type="nucleotide sequence ID" value="NC_002945.4"/>
</dbReference>
<dbReference type="SMR" id="P64119"/>
<dbReference type="GeneID" id="45426886"/>
<dbReference type="KEGG" id="mbo:BQ2027_MB2923C"/>
<dbReference type="PATRIC" id="fig|233413.5.peg.3209"/>
<dbReference type="Proteomes" id="UP000001419">
    <property type="component" value="Chromosome"/>
</dbReference>
<dbReference type="GO" id="GO:0005737">
    <property type="term" value="C:cytoplasm"/>
    <property type="evidence" value="ECO:0007669"/>
    <property type="project" value="UniProtKB-SubCell"/>
</dbReference>
<dbReference type="GO" id="GO:0097163">
    <property type="term" value="F:sulfur carrier activity"/>
    <property type="evidence" value="ECO:0007669"/>
    <property type="project" value="UniProtKB-UniRule"/>
</dbReference>
<dbReference type="GO" id="GO:0016783">
    <property type="term" value="F:sulfurtransferase activity"/>
    <property type="evidence" value="ECO:0007669"/>
    <property type="project" value="InterPro"/>
</dbReference>
<dbReference type="GO" id="GO:0006777">
    <property type="term" value="P:Mo-molybdopterin cofactor biosynthetic process"/>
    <property type="evidence" value="ECO:0007669"/>
    <property type="project" value="UniProtKB-UniRule"/>
</dbReference>
<dbReference type="Gene3D" id="3.10.20.10">
    <property type="match status" value="1"/>
</dbReference>
<dbReference type="Gene3D" id="3.40.140.10">
    <property type="entry name" value="Cytidine Deaminase, domain 2"/>
    <property type="match status" value="1"/>
</dbReference>
<dbReference type="HAMAP" id="MF_00187">
    <property type="entry name" value="FdhD"/>
    <property type="match status" value="1"/>
</dbReference>
<dbReference type="InterPro" id="IPR016193">
    <property type="entry name" value="Cytidine_deaminase-like"/>
</dbReference>
<dbReference type="InterPro" id="IPR003786">
    <property type="entry name" value="FdhD"/>
</dbReference>
<dbReference type="NCBIfam" id="TIGR00129">
    <property type="entry name" value="fdhD_narQ"/>
    <property type="match status" value="1"/>
</dbReference>
<dbReference type="NCBIfam" id="NF001943">
    <property type="entry name" value="PRK00724.1-2"/>
    <property type="match status" value="1"/>
</dbReference>
<dbReference type="PANTHER" id="PTHR30592">
    <property type="entry name" value="FORMATE DEHYDROGENASE"/>
    <property type="match status" value="1"/>
</dbReference>
<dbReference type="PANTHER" id="PTHR30592:SF1">
    <property type="entry name" value="SULFUR CARRIER PROTEIN FDHD"/>
    <property type="match status" value="1"/>
</dbReference>
<dbReference type="Pfam" id="PF02634">
    <property type="entry name" value="FdhD-NarQ"/>
    <property type="match status" value="1"/>
</dbReference>
<dbReference type="PIRSF" id="PIRSF015626">
    <property type="entry name" value="FdhD"/>
    <property type="match status" value="1"/>
</dbReference>
<dbReference type="SUPFAM" id="SSF53927">
    <property type="entry name" value="Cytidine deaminase-like"/>
    <property type="match status" value="1"/>
</dbReference>
<reference key="1">
    <citation type="journal article" date="2003" name="Proc. Natl. Acad. Sci. U.S.A.">
        <title>The complete genome sequence of Mycobacterium bovis.</title>
        <authorList>
            <person name="Garnier T."/>
            <person name="Eiglmeier K."/>
            <person name="Camus J.-C."/>
            <person name="Medina N."/>
            <person name="Mansoor H."/>
            <person name="Pryor M."/>
            <person name="Duthoy S."/>
            <person name="Grondin S."/>
            <person name="Lacroix C."/>
            <person name="Monsempe C."/>
            <person name="Simon S."/>
            <person name="Harris B."/>
            <person name="Atkin R."/>
            <person name="Doggett J."/>
            <person name="Mayes R."/>
            <person name="Keating L."/>
            <person name="Wheeler P.R."/>
            <person name="Parkhill J."/>
            <person name="Barrell B.G."/>
            <person name="Cole S.T."/>
            <person name="Gordon S.V."/>
            <person name="Hewinson R.G."/>
        </authorList>
    </citation>
    <scope>NUCLEOTIDE SEQUENCE [LARGE SCALE GENOMIC DNA]</scope>
    <source>
        <strain>ATCC BAA-935 / AF2122/97</strain>
    </source>
</reference>
<reference key="2">
    <citation type="journal article" date="2017" name="Genome Announc.">
        <title>Updated reference genome sequence and annotation of Mycobacterium bovis AF2122/97.</title>
        <authorList>
            <person name="Malone K.M."/>
            <person name="Farrell D."/>
            <person name="Stuber T.P."/>
            <person name="Schubert O.T."/>
            <person name="Aebersold R."/>
            <person name="Robbe-Austerman S."/>
            <person name="Gordon S.V."/>
        </authorList>
    </citation>
    <scope>NUCLEOTIDE SEQUENCE [LARGE SCALE GENOMIC DNA]</scope>
    <scope>GENOME REANNOTATION</scope>
    <source>
        <strain>ATCC BAA-935 / AF2122/97</strain>
    </source>
</reference>
<keyword id="KW-0963">Cytoplasm</keyword>
<keyword id="KW-0501">Molybdenum cofactor biosynthesis</keyword>
<keyword id="KW-1185">Reference proteome</keyword>
<comment type="function">
    <text evidence="1">Required for formate dehydrogenase (FDH) activity. Acts as a sulfur carrier protein that transfers sulfur from IscS to the molybdenum cofactor prior to its insertion into FDH.</text>
</comment>
<comment type="subcellular location">
    <subcellularLocation>
        <location evidence="1">Cytoplasm</location>
    </subcellularLocation>
</comment>
<comment type="similarity">
    <text evidence="1">Belongs to the FdhD family.</text>
</comment>
<organism>
    <name type="scientific">Mycobacterium bovis (strain ATCC BAA-935 / AF2122/97)</name>
    <dbReference type="NCBI Taxonomy" id="233413"/>
    <lineage>
        <taxon>Bacteria</taxon>
        <taxon>Bacillati</taxon>
        <taxon>Actinomycetota</taxon>
        <taxon>Actinomycetes</taxon>
        <taxon>Mycobacteriales</taxon>
        <taxon>Mycobacteriaceae</taxon>
        <taxon>Mycobacterium</taxon>
        <taxon>Mycobacterium tuberculosis complex</taxon>
    </lineage>
</organism>
<gene>
    <name evidence="1" type="primary">fdhD</name>
    <name type="ordered locus">BQ2027_MB2923C</name>
</gene>
<name>FDHD_MYCBO</name>
<evidence type="ECO:0000255" key="1">
    <source>
        <dbReference type="HAMAP-Rule" id="MF_00187"/>
    </source>
</evidence>
<proteinExistence type="inferred from homology"/>
<accession>P64119</accession>
<accession>A0A1R3Y2J9</accession>
<accession>Q10820</accession>
<accession>X2BMC9</accession>
<protein>
    <recommendedName>
        <fullName evidence="1">Sulfur carrier protein FdhD</fullName>
    </recommendedName>
</protein>
<sequence>MGYATAHRRVRHLSADQVITRPETLAVEEPLEIRVNGTPVTVTMRTPGSDFELVQGFLLAEGVVAHREDVLTVSYCGRRVEGNATGASTYNVLDVALAPGVKPPDVDVTRTFYTTSSCGVCGKASLQAVSQVSRFAPGGDPATVAADTLKAMPDQLRRAQKVFARTGGLHAAALFGVDGAMLAVREDIGRHNAVDKVIGWAFERDRIPLGASVLLVSGRASFELTQKALMAGIPVLAAVSAPSSLAVSLADASGITLVAFLRGDSMNVYTRADRIT</sequence>